<comment type="function">
    <text evidence="1">Binds directly to 23S rRNA. The L1 stalk is quite mobile in the ribosome, and is involved in E site tRNA release.</text>
</comment>
<comment type="function">
    <text evidence="1">Protein L1 is also a translational repressor protein, it controls the translation of the L11 operon by binding to its mRNA.</text>
</comment>
<comment type="subunit">
    <text evidence="1">Part of the 50S ribosomal subunit.</text>
</comment>
<comment type="similarity">
    <text evidence="1">Belongs to the universal ribosomal protein uL1 family.</text>
</comment>
<proteinExistence type="inferred from homology"/>
<organism>
    <name type="scientific">Sinorhizobium fredii (strain NBRC 101917 / NGR234)</name>
    <dbReference type="NCBI Taxonomy" id="394"/>
    <lineage>
        <taxon>Bacteria</taxon>
        <taxon>Pseudomonadati</taxon>
        <taxon>Pseudomonadota</taxon>
        <taxon>Alphaproteobacteria</taxon>
        <taxon>Hyphomicrobiales</taxon>
        <taxon>Rhizobiaceae</taxon>
        <taxon>Sinorhizobium/Ensifer group</taxon>
        <taxon>Sinorhizobium</taxon>
    </lineage>
</organism>
<accession>C3MAW8</accession>
<evidence type="ECO:0000255" key="1">
    <source>
        <dbReference type="HAMAP-Rule" id="MF_01318"/>
    </source>
</evidence>
<evidence type="ECO:0000305" key="2"/>
<name>RL1_SINFN</name>
<keyword id="KW-1185">Reference proteome</keyword>
<keyword id="KW-0678">Repressor</keyword>
<keyword id="KW-0687">Ribonucleoprotein</keyword>
<keyword id="KW-0689">Ribosomal protein</keyword>
<keyword id="KW-0694">RNA-binding</keyword>
<keyword id="KW-0699">rRNA-binding</keyword>
<keyword id="KW-0810">Translation regulation</keyword>
<keyword id="KW-0820">tRNA-binding</keyword>
<dbReference type="EMBL" id="CP001389">
    <property type="protein sequence ID" value="ACP24961.1"/>
    <property type="molecule type" value="Genomic_DNA"/>
</dbReference>
<dbReference type="RefSeq" id="WP_012707744.1">
    <property type="nucleotide sequence ID" value="NC_012587.1"/>
</dbReference>
<dbReference type="RefSeq" id="YP_002825714.1">
    <property type="nucleotide sequence ID" value="NC_012587.1"/>
</dbReference>
<dbReference type="SMR" id="C3MAW8"/>
<dbReference type="STRING" id="394.NGR_c11790"/>
<dbReference type="KEGG" id="rhi:NGR_c11790"/>
<dbReference type="PATRIC" id="fig|394.7.peg.3995"/>
<dbReference type="eggNOG" id="COG0081">
    <property type="taxonomic scope" value="Bacteria"/>
</dbReference>
<dbReference type="HOGENOM" id="CLU_062853_0_0_5"/>
<dbReference type="OrthoDB" id="9803740at2"/>
<dbReference type="Proteomes" id="UP000001054">
    <property type="component" value="Chromosome"/>
</dbReference>
<dbReference type="GO" id="GO:0022625">
    <property type="term" value="C:cytosolic large ribosomal subunit"/>
    <property type="evidence" value="ECO:0007669"/>
    <property type="project" value="TreeGrafter"/>
</dbReference>
<dbReference type="GO" id="GO:0019843">
    <property type="term" value="F:rRNA binding"/>
    <property type="evidence" value="ECO:0007669"/>
    <property type="project" value="UniProtKB-UniRule"/>
</dbReference>
<dbReference type="GO" id="GO:0003735">
    <property type="term" value="F:structural constituent of ribosome"/>
    <property type="evidence" value="ECO:0007669"/>
    <property type="project" value="InterPro"/>
</dbReference>
<dbReference type="GO" id="GO:0000049">
    <property type="term" value="F:tRNA binding"/>
    <property type="evidence" value="ECO:0007669"/>
    <property type="project" value="UniProtKB-KW"/>
</dbReference>
<dbReference type="GO" id="GO:0006417">
    <property type="term" value="P:regulation of translation"/>
    <property type="evidence" value="ECO:0007669"/>
    <property type="project" value="UniProtKB-KW"/>
</dbReference>
<dbReference type="GO" id="GO:0006412">
    <property type="term" value="P:translation"/>
    <property type="evidence" value="ECO:0007669"/>
    <property type="project" value="UniProtKB-UniRule"/>
</dbReference>
<dbReference type="CDD" id="cd00403">
    <property type="entry name" value="Ribosomal_L1"/>
    <property type="match status" value="1"/>
</dbReference>
<dbReference type="FunFam" id="3.40.50.790:FF:000001">
    <property type="entry name" value="50S ribosomal protein L1"/>
    <property type="match status" value="1"/>
</dbReference>
<dbReference type="Gene3D" id="3.30.190.20">
    <property type="match status" value="1"/>
</dbReference>
<dbReference type="Gene3D" id="3.40.50.790">
    <property type="match status" value="1"/>
</dbReference>
<dbReference type="HAMAP" id="MF_01318_B">
    <property type="entry name" value="Ribosomal_uL1_B"/>
    <property type="match status" value="1"/>
</dbReference>
<dbReference type="InterPro" id="IPR005878">
    <property type="entry name" value="Ribosom_uL1_bac-type"/>
</dbReference>
<dbReference type="InterPro" id="IPR002143">
    <property type="entry name" value="Ribosomal_uL1"/>
</dbReference>
<dbReference type="InterPro" id="IPR023674">
    <property type="entry name" value="Ribosomal_uL1-like"/>
</dbReference>
<dbReference type="InterPro" id="IPR028364">
    <property type="entry name" value="Ribosomal_uL1/biogenesis"/>
</dbReference>
<dbReference type="InterPro" id="IPR016095">
    <property type="entry name" value="Ribosomal_uL1_3-a/b-sand"/>
</dbReference>
<dbReference type="InterPro" id="IPR023673">
    <property type="entry name" value="Ribosomal_uL1_CS"/>
</dbReference>
<dbReference type="NCBIfam" id="TIGR01169">
    <property type="entry name" value="rplA_bact"/>
    <property type="match status" value="1"/>
</dbReference>
<dbReference type="PANTHER" id="PTHR36427">
    <property type="entry name" value="54S RIBOSOMAL PROTEIN L1, MITOCHONDRIAL"/>
    <property type="match status" value="1"/>
</dbReference>
<dbReference type="PANTHER" id="PTHR36427:SF3">
    <property type="entry name" value="LARGE RIBOSOMAL SUBUNIT PROTEIN UL1M"/>
    <property type="match status" value="1"/>
</dbReference>
<dbReference type="Pfam" id="PF00687">
    <property type="entry name" value="Ribosomal_L1"/>
    <property type="match status" value="1"/>
</dbReference>
<dbReference type="PIRSF" id="PIRSF002155">
    <property type="entry name" value="Ribosomal_L1"/>
    <property type="match status" value="1"/>
</dbReference>
<dbReference type="SUPFAM" id="SSF56808">
    <property type="entry name" value="Ribosomal protein L1"/>
    <property type="match status" value="1"/>
</dbReference>
<dbReference type="PROSITE" id="PS01199">
    <property type="entry name" value="RIBOSOMAL_L1"/>
    <property type="match status" value="1"/>
</dbReference>
<sequence>MAKIAKRVQKSREGIDPAKVYGLTEAVTLVKERATAKFDETIEVAMNLGVDPRHADQMVRGVVNLPNGTGRSVRVAVFARGAKADEAKAAGADVVGAEDLVEIVQGGKIDFDRCIATPDMMPLVGRLGKVLGPRGMMPNPKVGTVTMDVTAAVKSSKGGAVEFRVEKAGIVHAGVGKASFDAKALEENIRAFADAVIKAKPTGAKGNYVKRVAISSTMGPGLKIDPATLSVA</sequence>
<protein>
    <recommendedName>
        <fullName evidence="1">Large ribosomal subunit protein uL1</fullName>
    </recommendedName>
    <alternativeName>
        <fullName evidence="2">50S ribosomal protein L1</fullName>
    </alternativeName>
</protein>
<gene>
    <name evidence="1" type="primary">rplA</name>
    <name type="ordered locus">NGR_c11790</name>
</gene>
<reference key="1">
    <citation type="journal article" date="2009" name="Appl. Environ. Microbiol.">
        <title>Rhizobium sp. strain NGR234 possesses a remarkable number of secretion systems.</title>
        <authorList>
            <person name="Schmeisser C."/>
            <person name="Liesegang H."/>
            <person name="Krysciak D."/>
            <person name="Bakkou N."/>
            <person name="Le Quere A."/>
            <person name="Wollherr A."/>
            <person name="Heinemeyer I."/>
            <person name="Morgenstern B."/>
            <person name="Pommerening-Roeser A."/>
            <person name="Flores M."/>
            <person name="Palacios R."/>
            <person name="Brenner S."/>
            <person name="Gottschalk G."/>
            <person name="Schmitz R.A."/>
            <person name="Broughton W.J."/>
            <person name="Perret X."/>
            <person name="Strittmatter A.W."/>
            <person name="Streit W.R."/>
        </authorList>
    </citation>
    <scope>NUCLEOTIDE SEQUENCE [LARGE SCALE GENOMIC DNA]</scope>
    <source>
        <strain>NBRC 101917 / NGR234</strain>
    </source>
</reference>
<feature type="chain" id="PRO_1000165694" description="Large ribosomal subunit protein uL1">
    <location>
        <begin position="1"/>
        <end position="232"/>
    </location>
</feature>